<gene>
    <name evidence="3" type="primary">pabC</name>
    <name type="ordered locus">BSU00760</name>
</gene>
<dbReference type="EC" id="4.1.3.38"/>
<dbReference type="EMBL" id="M34053">
    <property type="protein sequence ID" value="AAA22696.1"/>
    <property type="molecule type" value="Genomic_DNA"/>
</dbReference>
<dbReference type="EMBL" id="D26185">
    <property type="protein sequence ID" value="BAA05311.1"/>
    <property type="molecule type" value="Genomic_DNA"/>
</dbReference>
<dbReference type="EMBL" id="AL009126">
    <property type="protein sequence ID" value="CAB11852.1"/>
    <property type="molecule type" value="Genomic_DNA"/>
</dbReference>
<dbReference type="PIR" id="C37854">
    <property type="entry name" value="C37854"/>
</dbReference>
<dbReference type="RefSeq" id="NP_387957.1">
    <property type="nucleotide sequence ID" value="NC_000964.3"/>
</dbReference>
<dbReference type="RefSeq" id="WP_003244544.1">
    <property type="nucleotide sequence ID" value="NZ_OZ025638.1"/>
</dbReference>
<dbReference type="SMR" id="P28821"/>
<dbReference type="FunCoup" id="P28821">
    <property type="interactions" value="172"/>
</dbReference>
<dbReference type="STRING" id="224308.BSU00760"/>
<dbReference type="PaxDb" id="224308-BSU00760"/>
<dbReference type="EnsemblBacteria" id="CAB11852">
    <property type="protein sequence ID" value="CAB11852"/>
    <property type="gene ID" value="BSU_00760"/>
</dbReference>
<dbReference type="GeneID" id="936944"/>
<dbReference type="KEGG" id="bsu:BSU00760"/>
<dbReference type="PATRIC" id="fig|224308.179.peg.76"/>
<dbReference type="eggNOG" id="COG0115">
    <property type="taxonomic scope" value="Bacteria"/>
</dbReference>
<dbReference type="InParanoid" id="P28821"/>
<dbReference type="OrthoDB" id="9805628at2"/>
<dbReference type="PhylomeDB" id="P28821"/>
<dbReference type="BioCyc" id="BSUB:BSU00760-MONOMER"/>
<dbReference type="BioCyc" id="MetaCyc:BSU00760-MONOMER"/>
<dbReference type="UniPathway" id="UPA00077">
    <property type="reaction ID" value="UER00150"/>
</dbReference>
<dbReference type="Proteomes" id="UP000001570">
    <property type="component" value="Chromosome"/>
</dbReference>
<dbReference type="GO" id="GO:0005829">
    <property type="term" value="C:cytosol"/>
    <property type="evidence" value="ECO:0000318"/>
    <property type="project" value="GO_Central"/>
</dbReference>
<dbReference type="GO" id="GO:0008696">
    <property type="term" value="F:4-amino-4-deoxychorismate lyase activity"/>
    <property type="evidence" value="ECO:0007669"/>
    <property type="project" value="UniProtKB-EC"/>
</dbReference>
<dbReference type="GO" id="GO:0030170">
    <property type="term" value="F:pyridoxal phosphate binding"/>
    <property type="evidence" value="ECO:0007669"/>
    <property type="project" value="InterPro"/>
</dbReference>
<dbReference type="GO" id="GO:0019752">
    <property type="term" value="P:carboxylic acid metabolic process"/>
    <property type="evidence" value="ECO:0000318"/>
    <property type="project" value="GO_Central"/>
</dbReference>
<dbReference type="GO" id="GO:0046656">
    <property type="term" value="P:folic acid biosynthetic process"/>
    <property type="evidence" value="ECO:0007669"/>
    <property type="project" value="UniProtKB-KW"/>
</dbReference>
<dbReference type="GO" id="GO:0046654">
    <property type="term" value="P:tetrahydrofolate biosynthetic process"/>
    <property type="evidence" value="ECO:0007669"/>
    <property type="project" value="UniProtKB-UniPathway"/>
</dbReference>
<dbReference type="CDD" id="cd01559">
    <property type="entry name" value="ADCL_like"/>
    <property type="match status" value="1"/>
</dbReference>
<dbReference type="FunFam" id="3.30.470.10:FF:000011">
    <property type="entry name" value="4-amino-4-deoxychorismate lyase"/>
    <property type="match status" value="1"/>
</dbReference>
<dbReference type="FunFam" id="3.20.10.10:FF:000002">
    <property type="entry name" value="D-alanine aminotransferase"/>
    <property type="match status" value="1"/>
</dbReference>
<dbReference type="Gene3D" id="3.30.470.10">
    <property type="match status" value="1"/>
</dbReference>
<dbReference type="Gene3D" id="3.20.10.10">
    <property type="entry name" value="D-amino Acid Aminotransferase, subunit A, domain 2"/>
    <property type="match status" value="1"/>
</dbReference>
<dbReference type="InterPro" id="IPR017824">
    <property type="entry name" value="Aminodeoxychorismate_lyase_IV"/>
</dbReference>
<dbReference type="InterPro" id="IPR001544">
    <property type="entry name" value="Aminotrans_IV"/>
</dbReference>
<dbReference type="InterPro" id="IPR018300">
    <property type="entry name" value="Aminotrans_IV_CS"/>
</dbReference>
<dbReference type="InterPro" id="IPR036038">
    <property type="entry name" value="Aminotransferase-like"/>
</dbReference>
<dbReference type="InterPro" id="IPR043132">
    <property type="entry name" value="BCAT-like_C"/>
</dbReference>
<dbReference type="InterPro" id="IPR043131">
    <property type="entry name" value="BCAT-like_N"/>
</dbReference>
<dbReference type="InterPro" id="IPR050571">
    <property type="entry name" value="Class-IV_PLP-Dep_Aminotrnsfr"/>
</dbReference>
<dbReference type="NCBIfam" id="NF005800">
    <property type="entry name" value="PRK07650.1"/>
    <property type="match status" value="1"/>
</dbReference>
<dbReference type="PANTHER" id="PTHR42743">
    <property type="entry name" value="AMINO-ACID AMINOTRANSFERASE"/>
    <property type="match status" value="1"/>
</dbReference>
<dbReference type="PANTHER" id="PTHR42743:SF11">
    <property type="entry name" value="AMINODEOXYCHORISMATE LYASE"/>
    <property type="match status" value="1"/>
</dbReference>
<dbReference type="Pfam" id="PF01063">
    <property type="entry name" value="Aminotran_4"/>
    <property type="match status" value="1"/>
</dbReference>
<dbReference type="SUPFAM" id="SSF56752">
    <property type="entry name" value="D-aminoacid aminotransferase-like PLP-dependent enzymes"/>
    <property type="match status" value="1"/>
</dbReference>
<dbReference type="PROSITE" id="PS00770">
    <property type="entry name" value="AA_TRANSFER_CLASS_4"/>
    <property type="match status" value="1"/>
</dbReference>
<reference key="1">
    <citation type="journal article" date="1990" name="J. Bacteriol.">
        <title>An apparent Bacillus subtilis folic acid biosynthetic operon containing pab, an amphibolic trpG gene, a third gene required for synthesis of para-aminobenzoic acid, and the dihydropteroate synthase gene.</title>
        <authorList>
            <person name="Slock J."/>
            <person name="Stahly D.P."/>
            <person name="Han C.-Y."/>
            <person name="Six E.W."/>
            <person name="Crawford I.P."/>
        </authorList>
    </citation>
    <scope>NUCLEOTIDE SEQUENCE [GENOMIC DNA]</scope>
    <scope>DISRUPTION PHENOTYPE</scope>
    <source>
        <strain>ASB342</strain>
    </source>
</reference>
<reference key="2">
    <citation type="journal article" date="1994" name="DNA Res.">
        <title>Systematic sequencing of the 180 kilobase region of the Bacillus subtilis chromosome containing the replication origin.</title>
        <authorList>
            <person name="Ogasawara N."/>
            <person name="Nakai S."/>
            <person name="Yoshikawa H."/>
        </authorList>
    </citation>
    <scope>NUCLEOTIDE SEQUENCE [GENOMIC DNA]</scope>
    <source>
        <strain>168</strain>
    </source>
</reference>
<reference key="3">
    <citation type="journal article" date="1997" name="Nature">
        <title>The complete genome sequence of the Gram-positive bacterium Bacillus subtilis.</title>
        <authorList>
            <person name="Kunst F."/>
            <person name="Ogasawara N."/>
            <person name="Moszer I."/>
            <person name="Albertini A.M."/>
            <person name="Alloni G."/>
            <person name="Azevedo V."/>
            <person name="Bertero M.G."/>
            <person name="Bessieres P."/>
            <person name="Bolotin A."/>
            <person name="Borchert S."/>
            <person name="Borriss R."/>
            <person name="Boursier L."/>
            <person name="Brans A."/>
            <person name="Braun M."/>
            <person name="Brignell S.C."/>
            <person name="Bron S."/>
            <person name="Brouillet S."/>
            <person name="Bruschi C.V."/>
            <person name="Caldwell B."/>
            <person name="Capuano V."/>
            <person name="Carter N.M."/>
            <person name="Choi S.-K."/>
            <person name="Codani J.-J."/>
            <person name="Connerton I.F."/>
            <person name="Cummings N.J."/>
            <person name="Daniel R.A."/>
            <person name="Denizot F."/>
            <person name="Devine K.M."/>
            <person name="Duesterhoeft A."/>
            <person name="Ehrlich S.D."/>
            <person name="Emmerson P.T."/>
            <person name="Entian K.-D."/>
            <person name="Errington J."/>
            <person name="Fabret C."/>
            <person name="Ferrari E."/>
            <person name="Foulger D."/>
            <person name="Fritz C."/>
            <person name="Fujita M."/>
            <person name="Fujita Y."/>
            <person name="Fuma S."/>
            <person name="Galizzi A."/>
            <person name="Galleron N."/>
            <person name="Ghim S.-Y."/>
            <person name="Glaser P."/>
            <person name="Goffeau A."/>
            <person name="Golightly E.J."/>
            <person name="Grandi G."/>
            <person name="Guiseppi G."/>
            <person name="Guy B.J."/>
            <person name="Haga K."/>
            <person name="Haiech J."/>
            <person name="Harwood C.R."/>
            <person name="Henaut A."/>
            <person name="Hilbert H."/>
            <person name="Holsappel S."/>
            <person name="Hosono S."/>
            <person name="Hullo M.-F."/>
            <person name="Itaya M."/>
            <person name="Jones L.-M."/>
            <person name="Joris B."/>
            <person name="Karamata D."/>
            <person name="Kasahara Y."/>
            <person name="Klaerr-Blanchard M."/>
            <person name="Klein C."/>
            <person name="Kobayashi Y."/>
            <person name="Koetter P."/>
            <person name="Koningstein G."/>
            <person name="Krogh S."/>
            <person name="Kumano M."/>
            <person name="Kurita K."/>
            <person name="Lapidus A."/>
            <person name="Lardinois S."/>
            <person name="Lauber J."/>
            <person name="Lazarevic V."/>
            <person name="Lee S.-M."/>
            <person name="Levine A."/>
            <person name="Liu H."/>
            <person name="Masuda S."/>
            <person name="Mauel C."/>
            <person name="Medigue C."/>
            <person name="Medina N."/>
            <person name="Mellado R.P."/>
            <person name="Mizuno M."/>
            <person name="Moestl D."/>
            <person name="Nakai S."/>
            <person name="Noback M."/>
            <person name="Noone D."/>
            <person name="O'Reilly M."/>
            <person name="Ogawa K."/>
            <person name="Ogiwara A."/>
            <person name="Oudega B."/>
            <person name="Park S.-H."/>
            <person name="Parro V."/>
            <person name="Pohl T.M."/>
            <person name="Portetelle D."/>
            <person name="Porwollik S."/>
            <person name="Prescott A.M."/>
            <person name="Presecan E."/>
            <person name="Pujic P."/>
            <person name="Purnelle B."/>
            <person name="Rapoport G."/>
            <person name="Rey M."/>
            <person name="Reynolds S."/>
            <person name="Rieger M."/>
            <person name="Rivolta C."/>
            <person name="Rocha E."/>
            <person name="Roche B."/>
            <person name="Rose M."/>
            <person name="Sadaie Y."/>
            <person name="Sato T."/>
            <person name="Scanlan E."/>
            <person name="Schleich S."/>
            <person name="Schroeter R."/>
            <person name="Scoffone F."/>
            <person name="Sekiguchi J."/>
            <person name="Sekowska A."/>
            <person name="Seror S.J."/>
            <person name="Serror P."/>
            <person name="Shin B.-S."/>
            <person name="Soldo B."/>
            <person name="Sorokin A."/>
            <person name="Tacconi E."/>
            <person name="Takagi T."/>
            <person name="Takahashi H."/>
            <person name="Takemaru K."/>
            <person name="Takeuchi M."/>
            <person name="Tamakoshi A."/>
            <person name="Tanaka T."/>
            <person name="Terpstra P."/>
            <person name="Tognoni A."/>
            <person name="Tosato V."/>
            <person name="Uchiyama S."/>
            <person name="Vandenbol M."/>
            <person name="Vannier F."/>
            <person name="Vassarotti A."/>
            <person name="Viari A."/>
            <person name="Wambutt R."/>
            <person name="Wedler E."/>
            <person name="Wedler H."/>
            <person name="Weitzenegger T."/>
            <person name="Winters P."/>
            <person name="Wipat A."/>
            <person name="Yamamoto H."/>
            <person name="Yamane K."/>
            <person name="Yasumoto K."/>
            <person name="Yata K."/>
            <person name="Yoshida K."/>
            <person name="Yoshikawa H.-F."/>
            <person name="Zumstein E."/>
            <person name="Yoshikawa H."/>
            <person name="Danchin A."/>
        </authorList>
    </citation>
    <scope>NUCLEOTIDE SEQUENCE [LARGE SCALE GENOMIC DNA]</scope>
    <source>
        <strain>168</strain>
    </source>
</reference>
<proteinExistence type="inferred from homology"/>
<evidence type="ECO:0000250" key="1"/>
<evidence type="ECO:0000269" key="2">
    <source>
    </source>
</evidence>
<evidence type="ECO:0000303" key="3">
    <source>
    </source>
</evidence>
<evidence type="ECO:0000305" key="4"/>
<keyword id="KW-0289">Folate biosynthesis</keyword>
<keyword id="KW-0456">Lyase</keyword>
<keyword id="KW-0663">Pyridoxal phosphate</keyword>
<keyword id="KW-1185">Reference proteome</keyword>
<protein>
    <recommendedName>
        <fullName>Aminodeoxychorismate lyase</fullName>
        <ecNumber>4.1.3.38</ecNumber>
    </recommendedName>
    <alternativeName>
        <fullName>4-amino-4-deoxychorismate lyase</fullName>
        <shortName>ADC lyase</shortName>
        <shortName>ADCL</shortName>
    </alternativeName>
</protein>
<organism>
    <name type="scientific">Bacillus subtilis (strain 168)</name>
    <dbReference type="NCBI Taxonomy" id="224308"/>
    <lineage>
        <taxon>Bacteria</taxon>
        <taxon>Bacillati</taxon>
        <taxon>Bacillota</taxon>
        <taxon>Bacilli</taxon>
        <taxon>Bacillales</taxon>
        <taxon>Bacillaceae</taxon>
        <taxon>Bacillus</taxon>
    </lineage>
</organism>
<comment type="function">
    <text evidence="1">Involved in the biosynthesis of p-aminobenzoate (PABA), a precursor of tetrahydrofolate. Converts 4-amino-4-deoxychorismate into 4-aminobenzoate (PABA) and pyruvate (By similarity).</text>
</comment>
<comment type="catalytic activity">
    <reaction>
        <text>4-amino-4-deoxychorismate = 4-aminobenzoate + pyruvate + H(+)</text>
        <dbReference type="Rhea" id="RHEA:16201"/>
        <dbReference type="ChEBI" id="CHEBI:15361"/>
        <dbReference type="ChEBI" id="CHEBI:15378"/>
        <dbReference type="ChEBI" id="CHEBI:17836"/>
        <dbReference type="ChEBI" id="CHEBI:58406"/>
        <dbReference type="EC" id="4.1.3.38"/>
    </reaction>
</comment>
<comment type="cofactor">
    <cofactor evidence="1">
        <name>pyridoxal 5'-phosphate</name>
        <dbReference type="ChEBI" id="CHEBI:597326"/>
    </cofactor>
</comment>
<comment type="pathway">
    <text>Cofactor biosynthesis; tetrahydrofolate biosynthesis; 4-aminobenzoate from chorismate: step 2/2.</text>
</comment>
<comment type="subunit">
    <text evidence="1">Homodimer.</text>
</comment>
<comment type="disruption phenotype">
    <text evidence="2">Requires p-aminobenzoic acid for growth.</text>
</comment>
<comment type="similarity">
    <text evidence="4">Belongs to the class-IV pyridoxal-phosphate-dependent aminotransferase family.</text>
</comment>
<accession>P28821</accession>
<sequence>MIYVNGRYMEEKDAVLSPFDHGFLYGIGVFETFRLYEGCPFLLDWHIERLERALKDLQIEYTVSKHEILEMLDKLLKLNDIKDGNARVRLNISAGISDKGFVAQTYDKPTVLCFVNQLKPESLPLQKEGKVLSIRRNTPEGSFRLKSHHYLNNMYAKREIGNDPRVEGIFLTEDGAVAEGIISNVFWRKGRCIYTPSLDTGILDGVTRRFIIENAKDIGLELKTGRYELEALLTADEAWMTNSVLEIIPFTKIEEVNYGSQSGEATSALQLLYKKEIKNMIHEKGGRAWRSTQ</sequence>
<name>PABC_BACSU</name>
<feature type="chain" id="PRO_0000103304" description="Aminodeoxychorismate lyase">
    <location>
        <begin position="1"/>
        <end position="293"/>
    </location>
</feature>
<feature type="modified residue" description="N6-(pyridoxal phosphate)lysine" evidence="1">
    <location>
        <position position="146"/>
    </location>
</feature>